<name>SCPB_BACHK</name>
<sequence>MDRTEQKSIIEGLLFVSGDEGIYPEQIAKVLEIEGNEVIDILEEMQKECEGAHRGLQIVQYAKVYRFATKKEHASYYQKLIEIPTAASLSQAALETLAIVAYRQPITRTEMEEIRGVKTDKALQTLVSHLLIKEMGRAEGPGRPILYGTTKEFLDTFGLKTLDDLPPLSEENEQMNEADLFFGSLQEISK</sequence>
<gene>
    <name evidence="1" type="primary">scpB</name>
    <name type="ordered locus">BT9727_3798</name>
</gene>
<evidence type="ECO:0000255" key="1">
    <source>
        <dbReference type="HAMAP-Rule" id="MF_01804"/>
    </source>
</evidence>
<reference key="1">
    <citation type="journal article" date="2006" name="J. Bacteriol.">
        <title>Pathogenomic sequence analysis of Bacillus cereus and Bacillus thuringiensis isolates closely related to Bacillus anthracis.</title>
        <authorList>
            <person name="Han C.S."/>
            <person name="Xie G."/>
            <person name="Challacombe J.F."/>
            <person name="Altherr M.R."/>
            <person name="Bhotika S.S."/>
            <person name="Bruce D."/>
            <person name="Campbell C.S."/>
            <person name="Campbell M.L."/>
            <person name="Chen J."/>
            <person name="Chertkov O."/>
            <person name="Cleland C."/>
            <person name="Dimitrijevic M."/>
            <person name="Doggett N.A."/>
            <person name="Fawcett J.J."/>
            <person name="Glavina T."/>
            <person name="Goodwin L.A."/>
            <person name="Hill K.K."/>
            <person name="Hitchcock P."/>
            <person name="Jackson P.J."/>
            <person name="Keim P."/>
            <person name="Kewalramani A.R."/>
            <person name="Longmire J."/>
            <person name="Lucas S."/>
            <person name="Malfatti S."/>
            <person name="McMurry K."/>
            <person name="Meincke L.J."/>
            <person name="Misra M."/>
            <person name="Moseman B.L."/>
            <person name="Mundt M."/>
            <person name="Munk A.C."/>
            <person name="Okinaka R.T."/>
            <person name="Parson-Quintana B."/>
            <person name="Reilly L.P."/>
            <person name="Richardson P."/>
            <person name="Robinson D.L."/>
            <person name="Rubin E."/>
            <person name="Saunders E."/>
            <person name="Tapia R."/>
            <person name="Tesmer J.G."/>
            <person name="Thayer N."/>
            <person name="Thompson L.S."/>
            <person name="Tice H."/>
            <person name="Ticknor L.O."/>
            <person name="Wills P.L."/>
            <person name="Brettin T.S."/>
            <person name="Gilna P."/>
        </authorList>
    </citation>
    <scope>NUCLEOTIDE SEQUENCE [LARGE SCALE GENOMIC DNA]</scope>
    <source>
        <strain>97-27</strain>
    </source>
</reference>
<comment type="function">
    <text evidence="1">Participates in chromosomal partition during cell division. May act via the formation of a condensin-like complex containing Smc and ScpA that pull DNA away from mid-cell into both cell halves.</text>
</comment>
<comment type="subunit">
    <text evidence="1">Homodimer. Homodimerization may be required to stabilize the binding of ScpA to the Smc head domains. Component of a cohesin-like complex composed of ScpA, ScpB and the Smc homodimer, in which ScpA and ScpB bind to the head domain of Smc. The presence of the three proteins is required for the association of the complex with DNA.</text>
</comment>
<comment type="subcellular location">
    <subcellularLocation>
        <location evidence="1">Cytoplasm</location>
    </subcellularLocation>
    <text evidence="1">Associated with two foci at the outer edges of the nucleoid region in young cells, and at four foci within both cell halves in older cells.</text>
</comment>
<comment type="similarity">
    <text evidence="1">Belongs to the ScpB family.</text>
</comment>
<organism>
    <name type="scientific">Bacillus thuringiensis subsp. konkukian (strain 97-27)</name>
    <dbReference type="NCBI Taxonomy" id="281309"/>
    <lineage>
        <taxon>Bacteria</taxon>
        <taxon>Bacillati</taxon>
        <taxon>Bacillota</taxon>
        <taxon>Bacilli</taxon>
        <taxon>Bacillales</taxon>
        <taxon>Bacillaceae</taxon>
        <taxon>Bacillus</taxon>
        <taxon>Bacillus cereus group</taxon>
    </lineage>
</organism>
<feature type="chain" id="PRO_0000211126" description="Segregation and condensation protein B">
    <location>
        <begin position="1"/>
        <end position="190"/>
    </location>
</feature>
<dbReference type="EMBL" id="AE017355">
    <property type="protein sequence ID" value="AAT63820.1"/>
    <property type="molecule type" value="Genomic_DNA"/>
</dbReference>
<dbReference type="RefSeq" id="WP_000376225.1">
    <property type="nucleotide sequence ID" value="NC_005957.1"/>
</dbReference>
<dbReference type="RefSeq" id="YP_038117.1">
    <property type="nucleotide sequence ID" value="NC_005957.1"/>
</dbReference>
<dbReference type="SMR" id="Q6HEA9"/>
<dbReference type="GeneID" id="45023946"/>
<dbReference type="KEGG" id="btk:BT9727_3798"/>
<dbReference type="PATRIC" id="fig|281309.8.peg.4048"/>
<dbReference type="HOGENOM" id="CLU_045647_5_3_9"/>
<dbReference type="Proteomes" id="UP000001301">
    <property type="component" value="Chromosome"/>
</dbReference>
<dbReference type="GO" id="GO:0005737">
    <property type="term" value="C:cytoplasm"/>
    <property type="evidence" value="ECO:0007669"/>
    <property type="project" value="UniProtKB-SubCell"/>
</dbReference>
<dbReference type="GO" id="GO:0051301">
    <property type="term" value="P:cell division"/>
    <property type="evidence" value="ECO:0007669"/>
    <property type="project" value="UniProtKB-KW"/>
</dbReference>
<dbReference type="GO" id="GO:0051304">
    <property type="term" value="P:chromosome separation"/>
    <property type="evidence" value="ECO:0007669"/>
    <property type="project" value="InterPro"/>
</dbReference>
<dbReference type="GO" id="GO:0006260">
    <property type="term" value="P:DNA replication"/>
    <property type="evidence" value="ECO:0007669"/>
    <property type="project" value="UniProtKB-UniRule"/>
</dbReference>
<dbReference type="Gene3D" id="1.10.10.10">
    <property type="entry name" value="Winged helix-like DNA-binding domain superfamily/Winged helix DNA-binding domain"/>
    <property type="match status" value="2"/>
</dbReference>
<dbReference type="HAMAP" id="MF_01804">
    <property type="entry name" value="ScpB"/>
    <property type="match status" value="1"/>
</dbReference>
<dbReference type="InterPro" id="IPR005234">
    <property type="entry name" value="ScpB_csome_segregation"/>
</dbReference>
<dbReference type="InterPro" id="IPR036388">
    <property type="entry name" value="WH-like_DNA-bd_sf"/>
</dbReference>
<dbReference type="InterPro" id="IPR036390">
    <property type="entry name" value="WH_DNA-bd_sf"/>
</dbReference>
<dbReference type="NCBIfam" id="TIGR00281">
    <property type="entry name" value="SMC-Scp complex subunit ScpB"/>
    <property type="match status" value="1"/>
</dbReference>
<dbReference type="PANTHER" id="PTHR34298">
    <property type="entry name" value="SEGREGATION AND CONDENSATION PROTEIN B"/>
    <property type="match status" value="1"/>
</dbReference>
<dbReference type="PANTHER" id="PTHR34298:SF2">
    <property type="entry name" value="SEGREGATION AND CONDENSATION PROTEIN B"/>
    <property type="match status" value="1"/>
</dbReference>
<dbReference type="Pfam" id="PF04079">
    <property type="entry name" value="SMC_ScpB"/>
    <property type="match status" value="1"/>
</dbReference>
<dbReference type="PIRSF" id="PIRSF019345">
    <property type="entry name" value="ScpB"/>
    <property type="match status" value="1"/>
</dbReference>
<dbReference type="SUPFAM" id="SSF46785">
    <property type="entry name" value="Winged helix' DNA-binding domain"/>
    <property type="match status" value="2"/>
</dbReference>
<keyword id="KW-0131">Cell cycle</keyword>
<keyword id="KW-0132">Cell division</keyword>
<keyword id="KW-0159">Chromosome partition</keyword>
<keyword id="KW-0963">Cytoplasm</keyword>
<proteinExistence type="inferred from homology"/>
<accession>Q6HEA9</accession>
<protein>
    <recommendedName>
        <fullName evidence="1">Segregation and condensation protein B</fullName>
    </recommendedName>
</protein>